<sequence length="170" mass="19543">MLPNTPRRAVYAGSFDPPTLGHLWMIRQAQSMFDELIVAIGINPDKRSTYTVAERQDMLCDITKMFPNVRTDVFENRFLVHYAREVDAGFIVRGIRSASDYEYERSMRHINSDLAPEISTVFLMPPREIAEVSSTMVKGLVGPEGWTETIHRYVPQAVYEKILAEHQHEN</sequence>
<reference key="1">
    <citation type="journal article" date="2000" name="Science">
        <title>Complete genome sequence of Neisseria meningitidis serogroup B strain MC58.</title>
        <authorList>
            <person name="Tettelin H."/>
            <person name="Saunders N.J."/>
            <person name="Heidelberg J.F."/>
            <person name="Jeffries A.C."/>
            <person name="Nelson K.E."/>
            <person name="Eisen J.A."/>
            <person name="Ketchum K.A."/>
            <person name="Hood D.W."/>
            <person name="Peden J.F."/>
            <person name="Dodson R.J."/>
            <person name="Nelson W.C."/>
            <person name="Gwinn M.L."/>
            <person name="DeBoy R.T."/>
            <person name="Peterson J.D."/>
            <person name="Hickey E.K."/>
            <person name="Haft D.H."/>
            <person name="Salzberg S.L."/>
            <person name="White O."/>
            <person name="Fleischmann R.D."/>
            <person name="Dougherty B.A."/>
            <person name="Mason T.M."/>
            <person name="Ciecko A."/>
            <person name="Parksey D.S."/>
            <person name="Blair E."/>
            <person name="Cittone H."/>
            <person name="Clark E.B."/>
            <person name="Cotton M.D."/>
            <person name="Utterback T.R."/>
            <person name="Khouri H.M."/>
            <person name="Qin H."/>
            <person name="Vamathevan J.J."/>
            <person name="Gill J."/>
            <person name="Scarlato V."/>
            <person name="Masignani V."/>
            <person name="Pizza M."/>
            <person name="Grandi G."/>
            <person name="Sun L."/>
            <person name="Smith H.O."/>
            <person name="Fraser C.M."/>
            <person name="Moxon E.R."/>
            <person name="Rappuoli R."/>
            <person name="Venter J.C."/>
        </authorList>
    </citation>
    <scope>NUCLEOTIDE SEQUENCE [LARGE SCALE GENOMIC DNA]</scope>
    <source>
        <strain>ATCC BAA-335 / MC58</strain>
    </source>
</reference>
<proteinExistence type="inferred from homology"/>
<feature type="chain" id="PRO_0000156244" description="Phosphopantetheine adenylyltransferase">
    <location>
        <begin position="1"/>
        <end position="170"/>
    </location>
</feature>
<feature type="binding site" evidence="1">
    <location>
        <begin position="14"/>
        <end position="15"/>
    </location>
    <ligand>
        <name>ATP</name>
        <dbReference type="ChEBI" id="CHEBI:30616"/>
    </ligand>
</feature>
<feature type="binding site" evidence="1">
    <location>
        <position position="14"/>
    </location>
    <ligand>
        <name>substrate</name>
    </ligand>
</feature>
<feature type="binding site" evidence="1">
    <location>
        <position position="22"/>
    </location>
    <ligand>
        <name>ATP</name>
        <dbReference type="ChEBI" id="CHEBI:30616"/>
    </ligand>
</feature>
<feature type="binding site" evidence="1">
    <location>
        <position position="46"/>
    </location>
    <ligand>
        <name>substrate</name>
    </ligand>
</feature>
<feature type="binding site" evidence="1">
    <location>
        <position position="79"/>
    </location>
    <ligand>
        <name>substrate</name>
    </ligand>
</feature>
<feature type="binding site" evidence="1">
    <location>
        <position position="93"/>
    </location>
    <ligand>
        <name>substrate</name>
    </ligand>
</feature>
<feature type="binding site" evidence="1">
    <location>
        <begin position="94"/>
        <end position="96"/>
    </location>
    <ligand>
        <name>ATP</name>
        <dbReference type="ChEBI" id="CHEBI:30616"/>
    </ligand>
</feature>
<feature type="binding site" evidence="1">
    <location>
        <position position="104"/>
    </location>
    <ligand>
        <name>ATP</name>
        <dbReference type="ChEBI" id="CHEBI:30616"/>
    </ligand>
</feature>
<feature type="binding site" evidence="1">
    <location>
        <begin position="129"/>
        <end position="135"/>
    </location>
    <ligand>
        <name>ATP</name>
        <dbReference type="ChEBI" id="CHEBI:30616"/>
    </ligand>
</feature>
<feature type="site" description="Transition state stabilizer" evidence="1">
    <location>
        <position position="22"/>
    </location>
</feature>
<comment type="function">
    <text evidence="1">Reversibly transfers an adenylyl group from ATP to 4'-phosphopantetheine, yielding dephospho-CoA (dPCoA) and pyrophosphate.</text>
</comment>
<comment type="catalytic activity">
    <reaction evidence="1">
        <text>(R)-4'-phosphopantetheine + ATP + H(+) = 3'-dephospho-CoA + diphosphate</text>
        <dbReference type="Rhea" id="RHEA:19801"/>
        <dbReference type="ChEBI" id="CHEBI:15378"/>
        <dbReference type="ChEBI" id="CHEBI:30616"/>
        <dbReference type="ChEBI" id="CHEBI:33019"/>
        <dbReference type="ChEBI" id="CHEBI:57328"/>
        <dbReference type="ChEBI" id="CHEBI:61723"/>
        <dbReference type="EC" id="2.7.7.3"/>
    </reaction>
</comment>
<comment type="cofactor">
    <cofactor evidence="1">
        <name>Mg(2+)</name>
        <dbReference type="ChEBI" id="CHEBI:18420"/>
    </cofactor>
</comment>
<comment type="pathway">
    <text evidence="1">Cofactor biosynthesis; coenzyme A biosynthesis; CoA from (R)-pantothenate: step 4/5.</text>
</comment>
<comment type="subunit">
    <text evidence="1">Homohexamer.</text>
</comment>
<comment type="subcellular location">
    <subcellularLocation>
        <location evidence="1">Cytoplasm</location>
    </subcellularLocation>
</comment>
<comment type="similarity">
    <text evidence="1">Belongs to the bacterial CoaD family.</text>
</comment>
<gene>
    <name evidence="1" type="primary">coaD</name>
    <name type="synonym">kdtB</name>
    <name type="ordered locus">NMB2019</name>
</gene>
<evidence type="ECO:0000255" key="1">
    <source>
        <dbReference type="HAMAP-Rule" id="MF_00151"/>
    </source>
</evidence>
<dbReference type="EC" id="2.7.7.3" evidence="1"/>
<dbReference type="EMBL" id="AE002098">
    <property type="protein sequence ID" value="AAF42342.1"/>
    <property type="molecule type" value="Genomic_DNA"/>
</dbReference>
<dbReference type="PIR" id="F81014">
    <property type="entry name" value="F81014"/>
</dbReference>
<dbReference type="RefSeq" id="NP_275011.1">
    <property type="nucleotide sequence ID" value="NC_003112.2"/>
</dbReference>
<dbReference type="RefSeq" id="WP_002218149.1">
    <property type="nucleotide sequence ID" value="NC_003112.2"/>
</dbReference>
<dbReference type="SMR" id="P63817"/>
<dbReference type="FunCoup" id="P63817">
    <property type="interactions" value="402"/>
</dbReference>
<dbReference type="STRING" id="122586.NMB2019"/>
<dbReference type="PaxDb" id="122586-NMB2019"/>
<dbReference type="GeneID" id="93386940"/>
<dbReference type="KEGG" id="nme:NMB2019"/>
<dbReference type="PATRIC" id="fig|122586.8.peg.2575"/>
<dbReference type="HOGENOM" id="CLU_100149_0_1_4"/>
<dbReference type="InParanoid" id="P63817"/>
<dbReference type="OrthoDB" id="9806661at2"/>
<dbReference type="UniPathway" id="UPA00241">
    <property type="reaction ID" value="UER00355"/>
</dbReference>
<dbReference type="Proteomes" id="UP000000425">
    <property type="component" value="Chromosome"/>
</dbReference>
<dbReference type="GO" id="GO:0005737">
    <property type="term" value="C:cytoplasm"/>
    <property type="evidence" value="ECO:0007669"/>
    <property type="project" value="UniProtKB-SubCell"/>
</dbReference>
<dbReference type="GO" id="GO:0005524">
    <property type="term" value="F:ATP binding"/>
    <property type="evidence" value="ECO:0007669"/>
    <property type="project" value="UniProtKB-KW"/>
</dbReference>
<dbReference type="GO" id="GO:0004595">
    <property type="term" value="F:pantetheine-phosphate adenylyltransferase activity"/>
    <property type="evidence" value="ECO:0000318"/>
    <property type="project" value="GO_Central"/>
</dbReference>
<dbReference type="GO" id="GO:0015937">
    <property type="term" value="P:coenzyme A biosynthetic process"/>
    <property type="evidence" value="ECO:0000318"/>
    <property type="project" value="GO_Central"/>
</dbReference>
<dbReference type="CDD" id="cd02163">
    <property type="entry name" value="PPAT"/>
    <property type="match status" value="1"/>
</dbReference>
<dbReference type="Gene3D" id="3.40.50.620">
    <property type="entry name" value="HUPs"/>
    <property type="match status" value="1"/>
</dbReference>
<dbReference type="HAMAP" id="MF_00151">
    <property type="entry name" value="PPAT_bact"/>
    <property type="match status" value="1"/>
</dbReference>
<dbReference type="InterPro" id="IPR004821">
    <property type="entry name" value="Cyt_trans-like"/>
</dbReference>
<dbReference type="InterPro" id="IPR001980">
    <property type="entry name" value="PPAT"/>
</dbReference>
<dbReference type="InterPro" id="IPR014729">
    <property type="entry name" value="Rossmann-like_a/b/a_fold"/>
</dbReference>
<dbReference type="NCBIfam" id="TIGR01510">
    <property type="entry name" value="coaD_prev_kdtB"/>
    <property type="match status" value="1"/>
</dbReference>
<dbReference type="NCBIfam" id="TIGR00125">
    <property type="entry name" value="cyt_tran_rel"/>
    <property type="match status" value="1"/>
</dbReference>
<dbReference type="PANTHER" id="PTHR21342">
    <property type="entry name" value="PHOSPHOPANTETHEINE ADENYLYLTRANSFERASE"/>
    <property type="match status" value="1"/>
</dbReference>
<dbReference type="PANTHER" id="PTHR21342:SF1">
    <property type="entry name" value="PHOSPHOPANTETHEINE ADENYLYLTRANSFERASE"/>
    <property type="match status" value="1"/>
</dbReference>
<dbReference type="Pfam" id="PF01467">
    <property type="entry name" value="CTP_transf_like"/>
    <property type="match status" value="1"/>
</dbReference>
<dbReference type="PRINTS" id="PR01020">
    <property type="entry name" value="LPSBIOSNTHSS"/>
</dbReference>
<dbReference type="SUPFAM" id="SSF52374">
    <property type="entry name" value="Nucleotidylyl transferase"/>
    <property type="match status" value="1"/>
</dbReference>
<protein>
    <recommendedName>
        <fullName evidence="1">Phosphopantetheine adenylyltransferase</fullName>
        <ecNumber evidence="1">2.7.7.3</ecNumber>
    </recommendedName>
    <alternativeName>
        <fullName evidence="1">Dephospho-CoA pyrophosphorylase</fullName>
    </alternativeName>
    <alternativeName>
        <fullName evidence="1">Pantetheine-phosphate adenylyltransferase</fullName>
        <shortName evidence="1">PPAT</shortName>
    </alternativeName>
</protein>
<name>COAD_NEIMB</name>
<organism>
    <name type="scientific">Neisseria meningitidis serogroup B (strain ATCC BAA-335 / MC58)</name>
    <dbReference type="NCBI Taxonomy" id="122586"/>
    <lineage>
        <taxon>Bacteria</taxon>
        <taxon>Pseudomonadati</taxon>
        <taxon>Pseudomonadota</taxon>
        <taxon>Betaproteobacteria</taxon>
        <taxon>Neisseriales</taxon>
        <taxon>Neisseriaceae</taxon>
        <taxon>Neisseria</taxon>
    </lineage>
</organism>
<keyword id="KW-0067">ATP-binding</keyword>
<keyword id="KW-0173">Coenzyme A biosynthesis</keyword>
<keyword id="KW-0963">Cytoplasm</keyword>
<keyword id="KW-0460">Magnesium</keyword>
<keyword id="KW-0547">Nucleotide-binding</keyword>
<keyword id="KW-0548">Nucleotidyltransferase</keyword>
<keyword id="KW-1185">Reference proteome</keyword>
<keyword id="KW-0808">Transferase</keyword>
<accession>P63817</accession>
<accession>Q9JQY9</accession>